<name>LPXC_PSEF5</name>
<reference key="1">
    <citation type="journal article" date="2005" name="Nat. Biotechnol.">
        <title>Complete genome sequence of the plant commensal Pseudomonas fluorescens Pf-5.</title>
        <authorList>
            <person name="Paulsen I.T."/>
            <person name="Press C.M."/>
            <person name="Ravel J."/>
            <person name="Kobayashi D.Y."/>
            <person name="Myers G.S.A."/>
            <person name="Mavrodi D.V."/>
            <person name="DeBoy R.T."/>
            <person name="Seshadri R."/>
            <person name="Ren Q."/>
            <person name="Madupu R."/>
            <person name="Dodson R.J."/>
            <person name="Durkin A.S."/>
            <person name="Brinkac L.M."/>
            <person name="Daugherty S.C."/>
            <person name="Sullivan S.A."/>
            <person name="Rosovitz M.J."/>
            <person name="Gwinn M.L."/>
            <person name="Zhou L."/>
            <person name="Schneider D.J."/>
            <person name="Cartinhour S.W."/>
            <person name="Nelson W.C."/>
            <person name="Weidman J."/>
            <person name="Watkins K."/>
            <person name="Tran K."/>
            <person name="Khouri H."/>
            <person name="Pierson E.A."/>
            <person name="Pierson L.S. III"/>
            <person name="Thomashow L.S."/>
            <person name="Loper J.E."/>
        </authorList>
    </citation>
    <scope>NUCLEOTIDE SEQUENCE [LARGE SCALE GENOMIC DNA]</scope>
    <source>
        <strain>ATCC BAA-477 / NRRL B-23932 / Pf-5</strain>
    </source>
</reference>
<proteinExistence type="inferred from homology"/>
<protein>
    <recommendedName>
        <fullName evidence="1">UDP-3-O-acyl-N-acetylglucosamine deacetylase</fullName>
        <shortName evidence="1">UDP-3-O-acyl-GlcNAc deacetylase</shortName>
        <ecNumber evidence="1">3.5.1.108</ecNumber>
    </recommendedName>
    <alternativeName>
        <fullName evidence="1">UDP-3-O-[R-3-hydroxymyristoyl]-N-acetylglucosamine deacetylase</fullName>
    </alternativeName>
</protein>
<accession>Q4K6J9</accession>
<gene>
    <name evidence="1" type="primary">lpxC</name>
    <name type="ordered locus">PFL_5055</name>
</gene>
<keyword id="KW-0378">Hydrolase</keyword>
<keyword id="KW-0441">Lipid A biosynthesis</keyword>
<keyword id="KW-0444">Lipid biosynthesis</keyword>
<keyword id="KW-0443">Lipid metabolism</keyword>
<keyword id="KW-0479">Metal-binding</keyword>
<keyword id="KW-0862">Zinc</keyword>
<dbReference type="EC" id="3.5.1.108" evidence="1"/>
<dbReference type="EMBL" id="CP000076">
    <property type="protein sequence ID" value="AAY94283.1"/>
    <property type="molecule type" value="Genomic_DNA"/>
</dbReference>
<dbReference type="RefSeq" id="WP_011063304.1">
    <property type="nucleotide sequence ID" value="NC_004129.6"/>
</dbReference>
<dbReference type="SMR" id="Q4K6J9"/>
<dbReference type="STRING" id="220664.PFL_5055"/>
<dbReference type="GeneID" id="57478027"/>
<dbReference type="KEGG" id="pfl:PFL_5055"/>
<dbReference type="eggNOG" id="COG0774">
    <property type="taxonomic scope" value="Bacteria"/>
</dbReference>
<dbReference type="HOGENOM" id="CLU_046528_1_0_6"/>
<dbReference type="UniPathway" id="UPA00359">
    <property type="reaction ID" value="UER00478"/>
</dbReference>
<dbReference type="Proteomes" id="UP000008540">
    <property type="component" value="Chromosome"/>
</dbReference>
<dbReference type="GO" id="GO:0016020">
    <property type="term" value="C:membrane"/>
    <property type="evidence" value="ECO:0007669"/>
    <property type="project" value="GOC"/>
</dbReference>
<dbReference type="GO" id="GO:0046872">
    <property type="term" value="F:metal ion binding"/>
    <property type="evidence" value="ECO:0007669"/>
    <property type="project" value="UniProtKB-KW"/>
</dbReference>
<dbReference type="GO" id="GO:0103117">
    <property type="term" value="F:UDP-3-O-acyl-N-acetylglucosamine deacetylase activity"/>
    <property type="evidence" value="ECO:0007669"/>
    <property type="project" value="UniProtKB-UniRule"/>
</dbReference>
<dbReference type="GO" id="GO:0009245">
    <property type="term" value="P:lipid A biosynthetic process"/>
    <property type="evidence" value="ECO:0007669"/>
    <property type="project" value="UniProtKB-UniRule"/>
</dbReference>
<dbReference type="FunFam" id="3.30.230.20:FF:000001">
    <property type="entry name" value="UDP-3-O-acyl-N-acetylglucosamine deacetylase"/>
    <property type="match status" value="1"/>
</dbReference>
<dbReference type="Gene3D" id="3.30.230.20">
    <property type="entry name" value="lpxc deacetylase, domain 1"/>
    <property type="match status" value="1"/>
</dbReference>
<dbReference type="Gene3D" id="3.30.1700.10">
    <property type="entry name" value="lpxc deacetylase, domain 2"/>
    <property type="match status" value="1"/>
</dbReference>
<dbReference type="HAMAP" id="MF_00388">
    <property type="entry name" value="LpxC"/>
    <property type="match status" value="1"/>
</dbReference>
<dbReference type="InterPro" id="IPR020568">
    <property type="entry name" value="Ribosomal_Su5_D2-typ_SF"/>
</dbReference>
<dbReference type="InterPro" id="IPR004463">
    <property type="entry name" value="UDP-acyl_GlcNac_deAcase"/>
</dbReference>
<dbReference type="InterPro" id="IPR011334">
    <property type="entry name" value="UDP-acyl_GlcNac_deAcase_C"/>
</dbReference>
<dbReference type="InterPro" id="IPR015870">
    <property type="entry name" value="UDP-acyl_N-AcGlcN_deAcase_N"/>
</dbReference>
<dbReference type="NCBIfam" id="TIGR00325">
    <property type="entry name" value="lpxC"/>
    <property type="match status" value="1"/>
</dbReference>
<dbReference type="PANTHER" id="PTHR33694">
    <property type="entry name" value="UDP-3-O-ACYL-N-ACETYLGLUCOSAMINE DEACETYLASE 1, MITOCHONDRIAL-RELATED"/>
    <property type="match status" value="1"/>
</dbReference>
<dbReference type="PANTHER" id="PTHR33694:SF1">
    <property type="entry name" value="UDP-3-O-ACYL-N-ACETYLGLUCOSAMINE DEACETYLASE 1, MITOCHONDRIAL-RELATED"/>
    <property type="match status" value="1"/>
</dbReference>
<dbReference type="Pfam" id="PF03331">
    <property type="entry name" value="LpxC"/>
    <property type="match status" value="1"/>
</dbReference>
<dbReference type="SUPFAM" id="SSF54211">
    <property type="entry name" value="Ribosomal protein S5 domain 2-like"/>
    <property type="match status" value="2"/>
</dbReference>
<feature type="chain" id="PRO_0000253683" description="UDP-3-O-acyl-N-acetylglucosamine deacetylase">
    <location>
        <begin position="1"/>
        <end position="303"/>
    </location>
</feature>
<feature type="active site" description="Proton donor" evidence="1">
    <location>
        <position position="264"/>
    </location>
</feature>
<feature type="binding site" evidence="1">
    <location>
        <position position="78"/>
    </location>
    <ligand>
        <name>Zn(2+)</name>
        <dbReference type="ChEBI" id="CHEBI:29105"/>
    </ligand>
</feature>
<feature type="binding site" evidence="1">
    <location>
        <position position="237"/>
    </location>
    <ligand>
        <name>Zn(2+)</name>
        <dbReference type="ChEBI" id="CHEBI:29105"/>
    </ligand>
</feature>
<feature type="binding site" evidence="1">
    <location>
        <position position="241"/>
    </location>
    <ligand>
        <name>Zn(2+)</name>
        <dbReference type="ChEBI" id="CHEBI:29105"/>
    </ligand>
</feature>
<sequence>MIKQRTLKNIIRATGVGLHSGEKVYLTLKPAPVDTGIVFCRADLDPVVQIPARAENVGETTMSTTLVNGDVKVDTVEHLLSAMAGLGIDNAYVELSASEVPIMDGSAGPFVFLIQSAGLEEQDAAKKFIRILREVTVEDGDKRATFVPFDGFKVSFEIDFDHPVFRDRTQSASVDFSSTSFVKEVSRARTFGFMSDIEYLRKHNLALGGSVENAIVVDSDGVLNEDGLRYEDEFVKHKILDAIGDLYLLGNSLIGEFKGFKSGHALNNQLLRKLIEQKDAWEVVTFEDASTAPISYMRPVAAV</sequence>
<organism>
    <name type="scientific">Pseudomonas fluorescens (strain ATCC BAA-477 / NRRL B-23932 / Pf-5)</name>
    <dbReference type="NCBI Taxonomy" id="220664"/>
    <lineage>
        <taxon>Bacteria</taxon>
        <taxon>Pseudomonadati</taxon>
        <taxon>Pseudomonadota</taxon>
        <taxon>Gammaproteobacteria</taxon>
        <taxon>Pseudomonadales</taxon>
        <taxon>Pseudomonadaceae</taxon>
        <taxon>Pseudomonas</taxon>
    </lineage>
</organism>
<comment type="function">
    <text evidence="1">Catalyzes the hydrolysis of UDP-3-O-myristoyl-N-acetylglucosamine to form UDP-3-O-myristoylglucosamine and acetate, the committed step in lipid A biosynthesis.</text>
</comment>
<comment type="catalytic activity">
    <reaction evidence="1">
        <text>a UDP-3-O-[(3R)-3-hydroxyacyl]-N-acetyl-alpha-D-glucosamine + H2O = a UDP-3-O-[(3R)-3-hydroxyacyl]-alpha-D-glucosamine + acetate</text>
        <dbReference type="Rhea" id="RHEA:67816"/>
        <dbReference type="ChEBI" id="CHEBI:15377"/>
        <dbReference type="ChEBI" id="CHEBI:30089"/>
        <dbReference type="ChEBI" id="CHEBI:137740"/>
        <dbReference type="ChEBI" id="CHEBI:173225"/>
        <dbReference type="EC" id="3.5.1.108"/>
    </reaction>
</comment>
<comment type="cofactor">
    <cofactor evidence="1">
        <name>Zn(2+)</name>
        <dbReference type="ChEBI" id="CHEBI:29105"/>
    </cofactor>
</comment>
<comment type="pathway">
    <text evidence="1">Glycolipid biosynthesis; lipid IV(A) biosynthesis; lipid IV(A) from (3R)-3-hydroxytetradecanoyl-[acyl-carrier-protein] and UDP-N-acetyl-alpha-D-glucosamine: step 2/6.</text>
</comment>
<comment type="similarity">
    <text evidence="1">Belongs to the LpxC family.</text>
</comment>
<evidence type="ECO:0000255" key="1">
    <source>
        <dbReference type="HAMAP-Rule" id="MF_00388"/>
    </source>
</evidence>